<organism evidence="10">
    <name type="scientific">Drosophila melanogaster</name>
    <name type="common">Fruit fly</name>
    <dbReference type="NCBI Taxonomy" id="7227"/>
    <lineage>
        <taxon>Eukaryota</taxon>
        <taxon>Metazoa</taxon>
        <taxon>Ecdysozoa</taxon>
        <taxon>Arthropoda</taxon>
        <taxon>Hexapoda</taxon>
        <taxon>Insecta</taxon>
        <taxon>Pterygota</taxon>
        <taxon>Neoptera</taxon>
        <taxon>Endopterygota</taxon>
        <taxon>Diptera</taxon>
        <taxon>Brachycera</taxon>
        <taxon>Muscomorpha</taxon>
        <taxon>Ephydroidea</taxon>
        <taxon>Drosophilidae</taxon>
        <taxon>Drosophila</taxon>
        <taxon>Sophophora</taxon>
    </lineage>
</organism>
<accession>Q9VGK7</accession>
<accession>Q8MRJ9</accession>
<feature type="chain" id="PRO_0000283999" description="Elongator complex protein 1">
    <location>
        <begin position="1"/>
        <end position="1252"/>
    </location>
</feature>
<feature type="region of interest" description="Mediates dimerization" evidence="1">
    <location>
        <begin position="814"/>
        <end position="1252"/>
    </location>
</feature>
<feature type="region of interest" description="Disordered" evidence="3">
    <location>
        <begin position="1097"/>
        <end position="1116"/>
    </location>
</feature>
<feature type="region of interest" description="Required for binding to tRNA" evidence="2">
    <location>
        <begin position="1111"/>
        <end position="1129"/>
    </location>
</feature>
<feature type="compositionally biased region" description="Basic residues" evidence="3">
    <location>
        <begin position="1106"/>
        <end position="1116"/>
    </location>
</feature>
<feature type="modified residue" description="Phosphoserine" evidence="4">
    <location>
        <position position="1094"/>
    </location>
</feature>
<feature type="sequence conflict" description="In Ref. 3; AAM50216." evidence="7" ref="3">
    <original>V</original>
    <variation>A</variation>
    <location>
        <position position="77"/>
    </location>
</feature>
<feature type="sequence conflict" description="In Ref. 3; AAM50216." evidence="7" ref="3">
    <original>T</original>
    <variation>A</variation>
    <location>
        <position position="522"/>
    </location>
</feature>
<feature type="sequence conflict" description="In Ref. 3; AAM50216." evidence="7" ref="3">
    <original>QLD</original>
    <variation>RLV</variation>
    <location>
        <begin position="614"/>
        <end position="616"/>
    </location>
</feature>
<feature type="sequence conflict" description="In Ref. 3; AAM50216." evidence="7" ref="3">
    <original>R</original>
    <variation>G</variation>
    <location>
        <position position="1106"/>
    </location>
</feature>
<evidence type="ECO:0000250" key="1">
    <source>
        <dbReference type="UniProtKB" id="O95163"/>
    </source>
</evidence>
<evidence type="ECO:0000250" key="2">
    <source>
        <dbReference type="UniProtKB" id="Q06706"/>
    </source>
</evidence>
<evidence type="ECO:0000256" key="3">
    <source>
        <dbReference type="SAM" id="MobiDB-lite"/>
    </source>
</evidence>
<evidence type="ECO:0000269" key="4">
    <source>
    </source>
</evidence>
<evidence type="ECO:0000269" key="5">
    <source>
    </source>
</evidence>
<evidence type="ECO:0000269" key="6">
    <source>
    </source>
</evidence>
<evidence type="ECO:0000305" key="7"/>
<evidence type="ECO:0000305" key="8">
    <source>
    </source>
</evidence>
<evidence type="ECO:0000312" key="9">
    <source>
        <dbReference type="FlyBase" id="FBgn0037926"/>
    </source>
</evidence>
<evidence type="ECO:0000312" key="10">
    <source>
        <dbReference type="Proteomes" id="UP000000803"/>
    </source>
</evidence>
<reference key="1">
    <citation type="journal article" date="2000" name="Science">
        <title>The genome sequence of Drosophila melanogaster.</title>
        <authorList>
            <person name="Adams M.D."/>
            <person name="Celniker S.E."/>
            <person name="Holt R.A."/>
            <person name="Evans C.A."/>
            <person name="Gocayne J.D."/>
            <person name="Amanatides P.G."/>
            <person name="Scherer S.E."/>
            <person name="Li P.W."/>
            <person name="Hoskins R.A."/>
            <person name="Galle R.F."/>
            <person name="George R.A."/>
            <person name="Lewis S.E."/>
            <person name="Richards S."/>
            <person name="Ashburner M."/>
            <person name="Henderson S.N."/>
            <person name="Sutton G.G."/>
            <person name="Wortman J.R."/>
            <person name="Yandell M.D."/>
            <person name="Zhang Q."/>
            <person name="Chen L.X."/>
            <person name="Brandon R.C."/>
            <person name="Rogers Y.-H.C."/>
            <person name="Blazej R.G."/>
            <person name="Champe M."/>
            <person name="Pfeiffer B.D."/>
            <person name="Wan K.H."/>
            <person name="Doyle C."/>
            <person name="Baxter E.G."/>
            <person name="Helt G."/>
            <person name="Nelson C.R."/>
            <person name="Miklos G.L.G."/>
            <person name="Abril J.F."/>
            <person name="Agbayani A."/>
            <person name="An H.-J."/>
            <person name="Andrews-Pfannkoch C."/>
            <person name="Baldwin D."/>
            <person name="Ballew R.M."/>
            <person name="Basu A."/>
            <person name="Baxendale J."/>
            <person name="Bayraktaroglu L."/>
            <person name="Beasley E.M."/>
            <person name="Beeson K.Y."/>
            <person name="Benos P.V."/>
            <person name="Berman B.P."/>
            <person name="Bhandari D."/>
            <person name="Bolshakov S."/>
            <person name="Borkova D."/>
            <person name="Botchan M.R."/>
            <person name="Bouck J."/>
            <person name="Brokstein P."/>
            <person name="Brottier P."/>
            <person name="Burtis K.C."/>
            <person name="Busam D.A."/>
            <person name="Butler H."/>
            <person name="Cadieu E."/>
            <person name="Center A."/>
            <person name="Chandra I."/>
            <person name="Cherry J.M."/>
            <person name="Cawley S."/>
            <person name="Dahlke C."/>
            <person name="Davenport L.B."/>
            <person name="Davies P."/>
            <person name="de Pablos B."/>
            <person name="Delcher A."/>
            <person name="Deng Z."/>
            <person name="Mays A.D."/>
            <person name="Dew I."/>
            <person name="Dietz S.M."/>
            <person name="Dodson K."/>
            <person name="Doup L.E."/>
            <person name="Downes M."/>
            <person name="Dugan-Rocha S."/>
            <person name="Dunkov B.C."/>
            <person name="Dunn P."/>
            <person name="Durbin K.J."/>
            <person name="Evangelista C.C."/>
            <person name="Ferraz C."/>
            <person name="Ferriera S."/>
            <person name="Fleischmann W."/>
            <person name="Fosler C."/>
            <person name="Gabrielian A.E."/>
            <person name="Garg N.S."/>
            <person name="Gelbart W.M."/>
            <person name="Glasser K."/>
            <person name="Glodek A."/>
            <person name="Gong F."/>
            <person name="Gorrell J.H."/>
            <person name="Gu Z."/>
            <person name="Guan P."/>
            <person name="Harris M."/>
            <person name="Harris N.L."/>
            <person name="Harvey D.A."/>
            <person name="Heiman T.J."/>
            <person name="Hernandez J.R."/>
            <person name="Houck J."/>
            <person name="Hostin D."/>
            <person name="Houston K.A."/>
            <person name="Howland T.J."/>
            <person name="Wei M.-H."/>
            <person name="Ibegwam C."/>
            <person name="Jalali M."/>
            <person name="Kalush F."/>
            <person name="Karpen G.H."/>
            <person name="Ke Z."/>
            <person name="Kennison J.A."/>
            <person name="Ketchum K.A."/>
            <person name="Kimmel B.E."/>
            <person name="Kodira C.D."/>
            <person name="Kraft C.L."/>
            <person name="Kravitz S."/>
            <person name="Kulp D."/>
            <person name="Lai Z."/>
            <person name="Lasko P."/>
            <person name="Lei Y."/>
            <person name="Levitsky A.A."/>
            <person name="Li J.H."/>
            <person name="Li Z."/>
            <person name="Liang Y."/>
            <person name="Lin X."/>
            <person name="Liu X."/>
            <person name="Mattei B."/>
            <person name="McIntosh T.C."/>
            <person name="McLeod M.P."/>
            <person name="McPherson D."/>
            <person name="Merkulov G."/>
            <person name="Milshina N.V."/>
            <person name="Mobarry C."/>
            <person name="Morris J."/>
            <person name="Moshrefi A."/>
            <person name="Mount S.M."/>
            <person name="Moy M."/>
            <person name="Murphy B."/>
            <person name="Murphy L."/>
            <person name="Muzny D.M."/>
            <person name="Nelson D.L."/>
            <person name="Nelson D.R."/>
            <person name="Nelson K.A."/>
            <person name="Nixon K."/>
            <person name="Nusskern D.R."/>
            <person name="Pacleb J.M."/>
            <person name="Palazzolo M."/>
            <person name="Pittman G.S."/>
            <person name="Pan S."/>
            <person name="Pollard J."/>
            <person name="Puri V."/>
            <person name="Reese M.G."/>
            <person name="Reinert K."/>
            <person name="Remington K."/>
            <person name="Saunders R.D.C."/>
            <person name="Scheeler F."/>
            <person name="Shen H."/>
            <person name="Shue B.C."/>
            <person name="Siden-Kiamos I."/>
            <person name="Simpson M."/>
            <person name="Skupski M.P."/>
            <person name="Smith T.J."/>
            <person name="Spier E."/>
            <person name="Spradling A.C."/>
            <person name="Stapleton M."/>
            <person name="Strong R."/>
            <person name="Sun E."/>
            <person name="Svirskas R."/>
            <person name="Tector C."/>
            <person name="Turner R."/>
            <person name="Venter E."/>
            <person name="Wang A.H."/>
            <person name="Wang X."/>
            <person name="Wang Z.-Y."/>
            <person name="Wassarman D.A."/>
            <person name="Weinstock G.M."/>
            <person name="Weissenbach J."/>
            <person name="Williams S.M."/>
            <person name="Woodage T."/>
            <person name="Worley K.C."/>
            <person name="Wu D."/>
            <person name="Yang S."/>
            <person name="Yao Q.A."/>
            <person name="Ye J."/>
            <person name="Yeh R.-F."/>
            <person name="Zaveri J.S."/>
            <person name="Zhan M."/>
            <person name="Zhang G."/>
            <person name="Zhao Q."/>
            <person name="Zheng L."/>
            <person name="Zheng X.H."/>
            <person name="Zhong F.N."/>
            <person name="Zhong W."/>
            <person name="Zhou X."/>
            <person name="Zhu S.C."/>
            <person name="Zhu X."/>
            <person name="Smith H.O."/>
            <person name="Gibbs R.A."/>
            <person name="Myers E.W."/>
            <person name="Rubin G.M."/>
            <person name="Venter J.C."/>
        </authorList>
    </citation>
    <scope>NUCLEOTIDE SEQUENCE [LARGE SCALE GENOMIC DNA]</scope>
    <source>
        <strain>Berkeley</strain>
    </source>
</reference>
<reference key="2">
    <citation type="journal article" date="2002" name="Genome Biol.">
        <title>Annotation of the Drosophila melanogaster euchromatic genome: a systematic review.</title>
        <authorList>
            <person name="Misra S."/>
            <person name="Crosby M.A."/>
            <person name="Mungall C.J."/>
            <person name="Matthews B.B."/>
            <person name="Campbell K.S."/>
            <person name="Hradecky P."/>
            <person name="Huang Y."/>
            <person name="Kaminker J.S."/>
            <person name="Millburn G.H."/>
            <person name="Prochnik S.E."/>
            <person name="Smith C.D."/>
            <person name="Tupy J.L."/>
            <person name="Whitfield E.J."/>
            <person name="Bayraktaroglu L."/>
            <person name="Berman B.P."/>
            <person name="Bettencourt B.R."/>
            <person name="Celniker S.E."/>
            <person name="de Grey A.D.N.J."/>
            <person name="Drysdale R.A."/>
            <person name="Harris N.L."/>
            <person name="Richter J."/>
            <person name="Russo S."/>
            <person name="Schroeder A.J."/>
            <person name="Shu S.Q."/>
            <person name="Stapleton M."/>
            <person name="Yamada C."/>
            <person name="Ashburner M."/>
            <person name="Gelbart W.M."/>
            <person name="Rubin G.M."/>
            <person name="Lewis S.E."/>
        </authorList>
    </citation>
    <scope>GENOME REANNOTATION</scope>
    <source>
        <strain>Berkeley</strain>
    </source>
</reference>
<reference key="3">
    <citation type="journal article" date="2002" name="Genome Biol.">
        <title>A Drosophila full-length cDNA resource.</title>
        <authorList>
            <person name="Stapleton M."/>
            <person name="Carlson J.W."/>
            <person name="Brokstein P."/>
            <person name="Yu C."/>
            <person name="Champe M."/>
            <person name="George R.A."/>
            <person name="Guarin H."/>
            <person name="Kronmiller B."/>
            <person name="Pacleb J.M."/>
            <person name="Park S."/>
            <person name="Wan K.H."/>
            <person name="Rubin G.M."/>
            <person name="Celniker S.E."/>
        </authorList>
    </citation>
    <scope>NUCLEOTIDE SEQUENCE [LARGE SCALE MRNA]</scope>
    <source>
        <strain>Berkeley</strain>
        <tissue>Ovary</tissue>
    </source>
</reference>
<reference key="4">
    <citation type="journal article" date="2008" name="J. Proteome Res.">
        <title>Phosphoproteome analysis of Drosophila melanogaster embryos.</title>
        <authorList>
            <person name="Zhai B."/>
            <person name="Villen J."/>
            <person name="Beausoleil S.A."/>
            <person name="Mintseris J."/>
            <person name="Gygi S.P."/>
        </authorList>
    </citation>
    <scope>PHOSPHORYLATION [LARGE SCALE ANALYSIS] AT SER-1094</scope>
    <scope>IDENTIFICATION BY MASS SPECTROMETRY</scope>
    <source>
        <tissue>Embryo</tissue>
    </source>
</reference>
<reference key="5">
    <citation type="journal article" date="2018" name="Learn. Memory">
        <title>Elongator complex is required for long-term olfactory memory formation in Drosophila.</title>
        <authorList>
            <person name="Yu D."/>
            <person name="Tan Y."/>
            <person name="Chakraborty M."/>
            <person name="Tomchik S."/>
            <person name="Davis R.L."/>
        </authorList>
    </citation>
    <scope>FUNCTION</scope>
    <scope>DISRUPTION PHENOTYPE</scope>
</reference>
<reference key="6">
    <citation type="journal article" date="2022" name="Nat. Cell Biol.">
        <title>Elongator stabilizes microtubules to control central spindle asymmetry and polarized trafficking of cell fate determinants.</title>
        <authorList>
            <person name="Planelles-Herrero V.J."/>
            <person name="Bittleston A."/>
            <person name="Seum C."/>
            <person name="Daeden A."/>
            <person name="Gaitan M.G."/>
            <person name="Derivery E."/>
        </authorList>
    </citation>
    <scope>FUNCTION</scope>
    <scope>IDENTIFICATION IN THE ELONGATOR COMPLEX</scope>
    <scope>INTERACTION WITH MICROTUBULES</scope>
    <scope>SUBCELLULAR LOCATION</scope>
    <scope>DISRUPTION PHENOTYPE</scope>
    <scope>IDENTIFICATION BY MASS SPECTROMETRY</scope>
</reference>
<dbReference type="EMBL" id="AE014297">
    <property type="protein sequence ID" value="AAF54670.2"/>
    <property type="molecule type" value="Genomic_DNA"/>
</dbReference>
<dbReference type="EMBL" id="AY119562">
    <property type="protein sequence ID" value="AAM50216.1"/>
    <property type="status" value="ALT_INIT"/>
    <property type="molecule type" value="mRNA"/>
</dbReference>
<dbReference type="RefSeq" id="NP_650098.1">
    <property type="nucleotide sequence ID" value="NM_141841.2"/>
</dbReference>
<dbReference type="SMR" id="Q9VGK7"/>
<dbReference type="BioGRID" id="66527">
    <property type="interactions" value="9"/>
</dbReference>
<dbReference type="ComplexPortal" id="CPX-10346">
    <property type="entry name" value="Elongator holoenzyme complex"/>
</dbReference>
<dbReference type="FunCoup" id="Q9VGK7">
    <property type="interactions" value="1862"/>
</dbReference>
<dbReference type="IntAct" id="Q9VGK7">
    <property type="interactions" value="4"/>
</dbReference>
<dbReference type="STRING" id="7227.FBpp0307426"/>
<dbReference type="iPTMnet" id="Q9VGK7"/>
<dbReference type="PaxDb" id="7227-FBpp0081896"/>
<dbReference type="EnsemblMetazoa" id="FBtr0082420">
    <property type="protein sequence ID" value="FBpp0081896"/>
    <property type="gene ID" value="FBgn0037926"/>
</dbReference>
<dbReference type="GeneID" id="41399"/>
<dbReference type="KEGG" id="dme:Dmel_CG10535"/>
<dbReference type="UCSC" id="CG10535-RA">
    <property type="organism name" value="d. melanogaster"/>
</dbReference>
<dbReference type="AGR" id="FB:FBgn0037926"/>
<dbReference type="CTD" id="8518"/>
<dbReference type="FlyBase" id="FBgn0037926">
    <property type="gene designation" value="Elp1"/>
</dbReference>
<dbReference type="VEuPathDB" id="VectorBase:FBgn0037926"/>
<dbReference type="eggNOG" id="KOG1920">
    <property type="taxonomic scope" value="Eukaryota"/>
</dbReference>
<dbReference type="GeneTree" id="ENSGT00390000013344"/>
<dbReference type="InParanoid" id="Q9VGK7"/>
<dbReference type="OrthoDB" id="40048at2759"/>
<dbReference type="PhylomeDB" id="Q9VGK7"/>
<dbReference type="UniPathway" id="UPA00988"/>
<dbReference type="BioGRID-ORCS" id="41399">
    <property type="hits" value="1 hit in 1 CRISPR screen"/>
</dbReference>
<dbReference type="GenomeRNAi" id="41399"/>
<dbReference type="PRO" id="PR:Q9VGK7"/>
<dbReference type="Proteomes" id="UP000000803">
    <property type="component" value="Chromosome 3R"/>
</dbReference>
<dbReference type="Bgee" id="FBgn0037926">
    <property type="expression patterns" value="Expressed in adult abdominal pericardial cell (Drosophila) in dorsal vessel heart and 70 other cell types or tissues"/>
</dbReference>
<dbReference type="ExpressionAtlas" id="Q9VGK7">
    <property type="expression patterns" value="baseline and differential"/>
</dbReference>
<dbReference type="GO" id="GO:0005737">
    <property type="term" value="C:cytoplasm"/>
    <property type="evidence" value="ECO:0000250"/>
    <property type="project" value="UniProtKB"/>
</dbReference>
<dbReference type="GO" id="GO:0005829">
    <property type="term" value="C:cytosol"/>
    <property type="evidence" value="ECO:0000318"/>
    <property type="project" value="GO_Central"/>
</dbReference>
<dbReference type="GO" id="GO:0033588">
    <property type="term" value="C:elongator holoenzyme complex"/>
    <property type="evidence" value="ECO:0000314"/>
    <property type="project" value="FlyBase"/>
</dbReference>
<dbReference type="GO" id="GO:0005874">
    <property type="term" value="C:microtubule"/>
    <property type="evidence" value="ECO:0007669"/>
    <property type="project" value="UniProtKB-KW"/>
</dbReference>
<dbReference type="GO" id="GO:0005634">
    <property type="term" value="C:nucleus"/>
    <property type="evidence" value="ECO:0007669"/>
    <property type="project" value="UniProtKB-SubCell"/>
</dbReference>
<dbReference type="GO" id="GO:0005819">
    <property type="term" value="C:spindle"/>
    <property type="evidence" value="ECO:0007669"/>
    <property type="project" value="UniProtKB-SubCell"/>
</dbReference>
<dbReference type="GO" id="GO:0000049">
    <property type="term" value="F:tRNA binding"/>
    <property type="evidence" value="ECO:0000318"/>
    <property type="project" value="GO_Central"/>
</dbReference>
<dbReference type="GO" id="GO:0009047">
    <property type="term" value="P:dosage compensation by hyperactivation of X chromosome"/>
    <property type="evidence" value="ECO:0000316"/>
    <property type="project" value="FlyBase"/>
</dbReference>
<dbReference type="GO" id="GO:0061867">
    <property type="term" value="P:establishment of mitotic spindle asymmetry"/>
    <property type="evidence" value="ECO:0000314"/>
    <property type="project" value="FlyBase"/>
</dbReference>
<dbReference type="GO" id="GO:0007616">
    <property type="term" value="P:long-term memory"/>
    <property type="evidence" value="ECO:0000315"/>
    <property type="project" value="UniProtKB"/>
</dbReference>
<dbReference type="GO" id="GO:0002926">
    <property type="term" value="P:tRNA wobble base 5-methoxycarbonylmethyl-2-thiouridinylation"/>
    <property type="evidence" value="ECO:0000318"/>
    <property type="project" value="GO_Central"/>
</dbReference>
<dbReference type="Gene3D" id="2.130.10.10">
    <property type="entry name" value="YVTN repeat-like/Quinoprotein amine dehydrogenase"/>
    <property type="match status" value="1"/>
</dbReference>
<dbReference type="InterPro" id="IPR056167">
    <property type="entry name" value="A-sol_ELP1"/>
</dbReference>
<dbReference type="InterPro" id="IPR006849">
    <property type="entry name" value="Elp1"/>
</dbReference>
<dbReference type="InterPro" id="IPR056165">
    <property type="entry name" value="ELP1_b-prop_2"/>
</dbReference>
<dbReference type="InterPro" id="IPR056164">
    <property type="entry name" value="ELP1_N_b-prop_1"/>
</dbReference>
<dbReference type="InterPro" id="IPR056169">
    <property type="entry name" value="HB_ELP1"/>
</dbReference>
<dbReference type="InterPro" id="IPR056166">
    <property type="entry name" value="TPR_ELP1"/>
</dbReference>
<dbReference type="InterPro" id="IPR015943">
    <property type="entry name" value="WD40/YVTN_repeat-like_dom_sf"/>
</dbReference>
<dbReference type="PANTHER" id="PTHR12747">
    <property type="entry name" value="ELONGATOR COMPLEX PROTEIN 1"/>
    <property type="match status" value="1"/>
</dbReference>
<dbReference type="PANTHER" id="PTHR12747:SF0">
    <property type="entry name" value="ELONGATOR COMPLEX PROTEIN 1"/>
    <property type="match status" value="1"/>
</dbReference>
<dbReference type="Pfam" id="PF23925">
    <property type="entry name" value="A-sol_ELP1"/>
    <property type="match status" value="1"/>
</dbReference>
<dbReference type="Pfam" id="PF04762">
    <property type="entry name" value="Beta-prop_ELP1_1st"/>
    <property type="match status" value="1"/>
</dbReference>
<dbReference type="Pfam" id="PF23797">
    <property type="entry name" value="Beta-prop_ELP1_2nd"/>
    <property type="match status" value="1"/>
</dbReference>
<dbReference type="Pfam" id="PF23936">
    <property type="entry name" value="HB_ELP1"/>
    <property type="match status" value="1"/>
</dbReference>
<dbReference type="Pfam" id="PF23878">
    <property type="entry name" value="TPR_ELP1"/>
    <property type="match status" value="1"/>
</dbReference>
<dbReference type="PIRSF" id="PIRSF017233">
    <property type="entry name" value="IKAP"/>
    <property type="match status" value="1"/>
</dbReference>
<dbReference type="SUPFAM" id="SSF69322">
    <property type="entry name" value="Tricorn protease domain 2"/>
    <property type="match status" value="1"/>
</dbReference>
<keyword id="KW-0963">Cytoplasm</keyword>
<keyword id="KW-0206">Cytoskeleton</keyword>
<keyword id="KW-0493">Microtubule</keyword>
<keyword id="KW-0539">Nucleus</keyword>
<keyword id="KW-0597">Phosphoprotein</keyword>
<keyword id="KW-1185">Reference proteome</keyword>
<keyword id="KW-0819">tRNA processing</keyword>
<sequence length="1252" mass="142814">MRNLKLRYCKELNAVAHPQHLLLQPELNGGASDIYFVVADNKIYAVQESGDVRLKVIADLPDIVGVEFLQLDNAICVASGAGEVILVDPQTGATSEGTFCDVGIESMAWSPNQEVVAFVTRTHNVVLMTSTFDVIAEQPLDAELDPDQQFVNVGWGKKETQFHGSEGKQAAKQKESDSTFIRDEQELNQDVSISWRGDGEFFVVSYVAAQLGRTFKVYDSEGKLNHTAEKSANLKDSVVWRPTGNWIAVPQQFPNKSTIALFEKNGLRHRELVLPFDLQEEPVVQLRWSEDSDILAIRTCAKEEQRVYLYTIGNYHWYLKQVLIFEQADPLALLHWDTRCGAEHTLHVLKESGKHLVYRWAFAVDRNNSIVGVIDGKRLLLTDFDEAIVPPPMSKIVLKFETYINAFISHGTSLWVYTCDRKIYLNEHIHTLGKELQKPIMLMPDAELSGLHLANLTHFSPHYLLATHSSAGSTRLLLLSYKDNDNKPGEWFYRVHSSVRINGLVNAVAVAPYAMNEFYVQTVNNGHTYEVSLKADKTLKVERSYVQLHEPADQIDWVIVKGCIWDGYTGALVTLRNQHLLHIDGYRIGEDVTSFCVVTNYLVYTQLNAMHFVQLDDRRQVASRNIERGAKIVTAVARKARVVLQLPRGNLEAICPRVLVLELVGDLLERGKYQKAIEMSRKQRINLNIIFDHDVKRFVSSVGAFLNDINEPQWLCLFLSELQNEDFTKGMYSSNYDASKQTYPSDYRVDQKVEYVCRLLEQQMNRFVSRFRLPLITAYVKLGCLEMALQVIWKEQQEDASLADQLLQHLLYLVDVNDLYNVALGTYDFGLVLFVAQKSQKDPKEFLPYLNDLKALPIDYRKFRIDDHLKRYTSALSHLAACGEQHYEEALEYIRKHGLYTDGLAFYREHIEFQKNIYVAYADHLRAIAKLDNASLMYERGGQLQQALLSAKHTLDWQRVLVLAKKLSEPLDQVAQSLVGPLQQQGRHMEAYELVKEHCQDRKRQFDVLLEGHLYSRAIYEAGLEDDDVSEKIAPALLAYGVQLESSLQADLQLFLDYKQRLLDIRRNQAKSGEGYIDTDVNLKEVDLLSDTTSLHSSQYSGTSRRTGKTFRSSKNRRKHERKLFSLKPGNPFEDIALIDALHNHVTKIAQQQQPVRDTCKALLQLANAADADPLAAALQREFKTLLQAVDAALDEIWTPELRGNGLMADHLTGPNVDYLALQKEQRYALLSPLKRFKPQLIMMDWQHEILQ</sequence>
<comment type="function">
    <text evidence="1 2 5 6">Component of the elongator complex, which is required for multiple tRNA modifications, including mcm5U (5-methoxycarbonylmethyl uridine), mcm5s2U (5-methoxycarbonylmethyl-2-thiouridine), and ncm5U (5-carbamoylmethyl uridine) (PubMed:36302967). The elongator complex catalyzes formation of carboxymethyluridine in the wobble base at position 34 in tRNAs (PubMed:36302967). ELP1 binds to tRNA, mediating interaction of the elongator complex with tRNA (By similarity). Binding by the elongator complex stabilizes microtubules and promotes their growth (PubMed:36302967). This induces central spindle asymmetry, promoting polarized signaling endosome trafficking during asymmetric cell division and cell fate assignation of sensory organ precursor cells (PubMed:36302967). Involved in protein synthesis-dependent long-term memory formation, probably as part of the elongator complex (PubMed:29545390).</text>
</comment>
<comment type="pathway">
    <text evidence="1">tRNA modification; 5-methoxycarbonylmethyl-2-thiouridine-tRNA biosynthesis.</text>
</comment>
<comment type="subunit">
    <text evidence="1 6">Homodimer (By similarity). Component of the elongator complex composed of Elp1, Elp2, Elp3, Elp4, Elp5 and Elp6 (PubMed:36302967). The elongator complex associates with and stabilizes microtubules; efficient interaction requires the full complex (PubMed:36302967).</text>
</comment>
<comment type="subcellular location">
    <subcellularLocation>
        <location evidence="1">Cytoplasm</location>
    </subcellularLocation>
    <subcellularLocation>
        <location evidence="1">Nucleus</location>
    </subcellularLocation>
    <subcellularLocation>
        <location evidence="8">Cytoplasm</location>
        <location evidence="8">Cytoskeleton</location>
        <location evidence="8">Spindle</location>
    </subcellularLocation>
    <text evidence="6">During asymmetric cell division of sensory organ precursor cells the elongator complex preferentially binds and stabilizes microtubules on the anterior side (pIIb daughter cell) of the spindle.</text>
</comment>
<comment type="disruption phenotype">
    <text evidence="5 6">RNAi-mediated knockdown is lethal in larval third instar (L3) stage (PubMed:36302967). RNAi-mediated knockdown in sensory organ precursor cells abolishes central spindle asymmetry during asymmetric cell division (PubMed:36302967). RNAi-mediated knockdown in adult mushroom body neurons impairs protein synthesis-dependent long-term memory formation (PubMed:29545390).</text>
</comment>
<comment type="similarity">
    <text evidence="7">Belongs to the ELP1/IKA1 family.</text>
</comment>
<comment type="caution">
    <text evidence="1">The elongator complex was originally thought to play a role in transcription elongation. However, it is no longer thought to play a direct role in this process and its primary function is thought to be in tRNA modification.</text>
</comment>
<comment type="sequence caution" evidence="7">
    <conflict type="erroneous initiation">
        <sequence resource="EMBL-CDS" id="AAM50216"/>
    </conflict>
    <text>Truncated N-terminus.</text>
</comment>
<name>ELP1_DROME</name>
<gene>
    <name evidence="9" type="primary">Elp1</name>
    <name evidence="9" type="ORF">CG10535</name>
</gene>
<protein>
    <recommendedName>
        <fullName evidence="7">Elongator complex protein 1</fullName>
    </recommendedName>
</protein>
<proteinExistence type="evidence at protein level"/>